<keyword id="KW-0067">ATP-binding</keyword>
<keyword id="KW-0131">Cell cycle</keyword>
<keyword id="KW-0132">Cell division</keyword>
<keyword id="KW-0133">Cell shape</keyword>
<keyword id="KW-0961">Cell wall biogenesis/degradation</keyword>
<keyword id="KW-0963">Cytoplasm</keyword>
<keyword id="KW-0436">Ligase</keyword>
<keyword id="KW-0547">Nucleotide-binding</keyword>
<keyword id="KW-0573">Peptidoglycan synthesis</keyword>
<keyword id="KW-1185">Reference proteome</keyword>
<accession>Q3J787</accession>
<organism>
    <name type="scientific">Nitrosococcus oceani (strain ATCC 19707 / BCRC 17464 / JCM 30415 / NCIMB 11848 / C-107)</name>
    <dbReference type="NCBI Taxonomy" id="323261"/>
    <lineage>
        <taxon>Bacteria</taxon>
        <taxon>Pseudomonadati</taxon>
        <taxon>Pseudomonadota</taxon>
        <taxon>Gammaproteobacteria</taxon>
        <taxon>Chromatiales</taxon>
        <taxon>Chromatiaceae</taxon>
        <taxon>Nitrosococcus</taxon>
    </lineage>
</organism>
<evidence type="ECO:0000255" key="1">
    <source>
        <dbReference type="HAMAP-Rule" id="MF_00639"/>
    </source>
</evidence>
<comment type="function">
    <text evidence="1">Cell wall formation. Catalyzes the addition of glutamate to the nucleotide precursor UDP-N-acetylmuramoyl-L-alanine (UMA).</text>
</comment>
<comment type="catalytic activity">
    <reaction evidence="1">
        <text>UDP-N-acetyl-alpha-D-muramoyl-L-alanine + D-glutamate + ATP = UDP-N-acetyl-alpha-D-muramoyl-L-alanyl-D-glutamate + ADP + phosphate + H(+)</text>
        <dbReference type="Rhea" id="RHEA:16429"/>
        <dbReference type="ChEBI" id="CHEBI:15378"/>
        <dbReference type="ChEBI" id="CHEBI:29986"/>
        <dbReference type="ChEBI" id="CHEBI:30616"/>
        <dbReference type="ChEBI" id="CHEBI:43474"/>
        <dbReference type="ChEBI" id="CHEBI:83898"/>
        <dbReference type="ChEBI" id="CHEBI:83900"/>
        <dbReference type="ChEBI" id="CHEBI:456216"/>
        <dbReference type="EC" id="6.3.2.9"/>
    </reaction>
</comment>
<comment type="pathway">
    <text evidence="1">Cell wall biogenesis; peptidoglycan biosynthesis.</text>
</comment>
<comment type="subcellular location">
    <subcellularLocation>
        <location evidence="1">Cytoplasm</location>
    </subcellularLocation>
</comment>
<comment type="similarity">
    <text evidence="1">Belongs to the MurCDEF family.</text>
</comment>
<feature type="chain" id="PRO_0000257208" description="UDP-N-acetylmuramoylalanine--D-glutamate ligase">
    <location>
        <begin position="1"/>
        <end position="453"/>
    </location>
</feature>
<feature type="binding site" evidence="1">
    <location>
        <begin position="120"/>
        <end position="126"/>
    </location>
    <ligand>
        <name>ATP</name>
        <dbReference type="ChEBI" id="CHEBI:30616"/>
    </ligand>
</feature>
<proteinExistence type="inferred from homology"/>
<dbReference type="EC" id="6.3.2.9" evidence="1"/>
<dbReference type="EMBL" id="CP000127">
    <property type="protein sequence ID" value="ABA59309.1"/>
    <property type="molecule type" value="Genomic_DNA"/>
</dbReference>
<dbReference type="RefSeq" id="WP_011331082.1">
    <property type="nucleotide sequence ID" value="NC_007484.1"/>
</dbReference>
<dbReference type="SMR" id="Q3J787"/>
<dbReference type="FunCoup" id="Q3J787">
    <property type="interactions" value="510"/>
</dbReference>
<dbReference type="STRING" id="323261.Noc_2863"/>
<dbReference type="KEGG" id="noc:Noc_2863"/>
<dbReference type="eggNOG" id="COG0771">
    <property type="taxonomic scope" value="Bacteria"/>
</dbReference>
<dbReference type="HOGENOM" id="CLU_032540_1_0_6"/>
<dbReference type="InParanoid" id="Q3J787"/>
<dbReference type="UniPathway" id="UPA00219"/>
<dbReference type="Proteomes" id="UP000006838">
    <property type="component" value="Chromosome"/>
</dbReference>
<dbReference type="GO" id="GO:0005737">
    <property type="term" value="C:cytoplasm"/>
    <property type="evidence" value="ECO:0007669"/>
    <property type="project" value="UniProtKB-SubCell"/>
</dbReference>
<dbReference type="GO" id="GO:0005524">
    <property type="term" value="F:ATP binding"/>
    <property type="evidence" value="ECO:0007669"/>
    <property type="project" value="UniProtKB-UniRule"/>
</dbReference>
<dbReference type="GO" id="GO:0008764">
    <property type="term" value="F:UDP-N-acetylmuramoylalanine-D-glutamate ligase activity"/>
    <property type="evidence" value="ECO:0007669"/>
    <property type="project" value="UniProtKB-UniRule"/>
</dbReference>
<dbReference type="GO" id="GO:0051301">
    <property type="term" value="P:cell division"/>
    <property type="evidence" value="ECO:0007669"/>
    <property type="project" value="UniProtKB-KW"/>
</dbReference>
<dbReference type="GO" id="GO:0071555">
    <property type="term" value="P:cell wall organization"/>
    <property type="evidence" value="ECO:0007669"/>
    <property type="project" value="UniProtKB-KW"/>
</dbReference>
<dbReference type="GO" id="GO:0009252">
    <property type="term" value="P:peptidoglycan biosynthetic process"/>
    <property type="evidence" value="ECO:0007669"/>
    <property type="project" value="UniProtKB-UniRule"/>
</dbReference>
<dbReference type="GO" id="GO:0008360">
    <property type="term" value="P:regulation of cell shape"/>
    <property type="evidence" value="ECO:0007669"/>
    <property type="project" value="UniProtKB-KW"/>
</dbReference>
<dbReference type="Gene3D" id="3.90.190.20">
    <property type="entry name" value="Mur ligase, C-terminal domain"/>
    <property type="match status" value="1"/>
</dbReference>
<dbReference type="Gene3D" id="3.40.1190.10">
    <property type="entry name" value="Mur-like, catalytic domain"/>
    <property type="match status" value="1"/>
</dbReference>
<dbReference type="Gene3D" id="3.40.50.720">
    <property type="entry name" value="NAD(P)-binding Rossmann-like Domain"/>
    <property type="match status" value="1"/>
</dbReference>
<dbReference type="HAMAP" id="MF_00639">
    <property type="entry name" value="MurD"/>
    <property type="match status" value="1"/>
</dbReference>
<dbReference type="InterPro" id="IPR036565">
    <property type="entry name" value="Mur-like_cat_sf"/>
</dbReference>
<dbReference type="InterPro" id="IPR004101">
    <property type="entry name" value="Mur_ligase_C"/>
</dbReference>
<dbReference type="InterPro" id="IPR036615">
    <property type="entry name" value="Mur_ligase_C_dom_sf"/>
</dbReference>
<dbReference type="InterPro" id="IPR013221">
    <property type="entry name" value="Mur_ligase_cen"/>
</dbReference>
<dbReference type="InterPro" id="IPR005762">
    <property type="entry name" value="MurD"/>
</dbReference>
<dbReference type="NCBIfam" id="TIGR01087">
    <property type="entry name" value="murD"/>
    <property type="match status" value="1"/>
</dbReference>
<dbReference type="PANTHER" id="PTHR43692">
    <property type="entry name" value="UDP-N-ACETYLMURAMOYLALANINE--D-GLUTAMATE LIGASE"/>
    <property type="match status" value="1"/>
</dbReference>
<dbReference type="PANTHER" id="PTHR43692:SF1">
    <property type="entry name" value="UDP-N-ACETYLMURAMOYLALANINE--D-GLUTAMATE LIGASE"/>
    <property type="match status" value="1"/>
</dbReference>
<dbReference type="Pfam" id="PF02875">
    <property type="entry name" value="Mur_ligase_C"/>
    <property type="match status" value="1"/>
</dbReference>
<dbReference type="Pfam" id="PF08245">
    <property type="entry name" value="Mur_ligase_M"/>
    <property type="match status" value="1"/>
</dbReference>
<dbReference type="Pfam" id="PF21799">
    <property type="entry name" value="MurD-like_N"/>
    <property type="match status" value="1"/>
</dbReference>
<dbReference type="SUPFAM" id="SSF51984">
    <property type="entry name" value="MurCD N-terminal domain"/>
    <property type="match status" value="1"/>
</dbReference>
<dbReference type="SUPFAM" id="SSF53623">
    <property type="entry name" value="MurD-like peptide ligases, catalytic domain"/>
    <property type="match status" value="1"/>
</dbReference>
<dbReference type="SUPFAM" id="SSF53244">
    <property type="entry name" value="MurD-like peptide ligases, peptide-binding domain"/>
    <property type="match status" value="1"/>
</dbReference>
<gene>
    <name evidence="1" type="primary">murD</name>
    <name type="ordered locus">Noc_2863</name>
</gene>
<protein>
    <recommendedName>
        <fullName evidence="1">UDP-N-acetylmuramoylalanine--D-glutamate ligase</fullName>
        <ecNumber evidence="1">6.3.2.9</ecNumber>
    </recommendedName>
    <alternativeName>
        <fullName evidence="1">D-glutamic acid-adding enzyme</fullName>
    </alternativeName>
    <alternativeName>
        <fullName evidence="1">UDP-N-acetylmuramoyl-L-alanyl-D-glutamate synthetase</fullName>
    </alternativeName>
</protein>
<name>MURD_NITOC</name>
<sequence length="453" mass="47863">MLNEPLQPQVAATSVILGLGKTGLSSARFLASRGFSIAVMDSRKSPPGLAALQEQNPDAVLRLGGFDAALIAEAEQLVVSPGVALSEPAILAARARGIPVVGDIELFASYVKAPVIGITGSNGKSTVTSLLEAMARQAGRQVLAGGNLGTPALELLEKPVPDLYILELSSFQLETTYTLDAVAACVLNISPDHMDRYPDLDAYCQAKARIYRGTGTMVINADDFRVASLVQPHRPCLRFTLGMPAVDEYGLQERAGETWLVRGHERLLSARRLPLAGRHNLANALAALALGEAVGLPRAAMLSALQAFSGLPHRCEWLAEVNGVRWYNDSKGTNVGATVAAIEGIPCQGKLILIAGGVGKGADFSPLSKPLIQRARAVVLMGQDASRLEAVLASGPPLYRVNSMDEAVVKANVLAQSGDCVLLSPACASFDMYADFEARGQAFRQAVREILSC</sequence>
<reference key="1">
    <citation type="journal article" date="2006" name="Appl. Environ. Microbiol.">
        <title>Complete genome sequence of the marine, chemolithoautotrophic, ammonia-oxidizing bacterium Nitrosococcus oceani ATCC 19707.</title>
        <authorList>
            <person name="Klotz M.G."/>
            <person name="Arp D.J."/>
            <person name="Chain P.S.G."/>
            <person name="El-Sheikh A.F."/>
            <person name="Hauser L.J."/>
            <person name="Hommes N.G."/>
            <person name="Larimer F.W."/>
            <person name="Malfatti S.A."/>
            <person name="Norton J.M."/>
            <person name="Poret-Peterson A.T."/>
            <person name="Vergez L.M."/>
            <person name="Ward B.B."/>
        </authorList>
    </citation>
    <scope>NUCLEOTIDE SEQUENCE [LARGE SCALE GENOMIC DNA]</scope>
    <source>
        <strain>ATCC 19707 / BCRC 17464 / JCM 30415 / NCIMB 11848 / C-107</strain>
    </source>
</reference>